<dbReference type="EC" id="3.6.1.27" evidence="1"/>
<dbReference type="EMBL" id="CP000950">
    <property type="protein sequence ID" value="ACA66943.1"/>
    <property type="molecule type" value="Genomic_DNA"/>
</dbReference>
<dbReference type="SMR" id="B1JM21"/>
<dbReference type="KEGG" id="ypy:YPK_0640"/>
<dbReference type="PATRIC" id="fig|502800.11.peg.1257"/>
<dbReference type="GO" id="GO:0005886">
    <property type="term" value="C:plasma membrane"/>
    <property type="evidence" value="ECO:0007669"/>
    <property type="project" value="UniProtKB-SubCell"/>
</dbReference>
<dbReference type="GO" id="GO:0050380">
    <property type="term" value="F:undecaprenyl-diphosphatase activity"/>
    <property type="evidence" value="ECO:0007669"/>
    <property type="project" value="UniProtKB-UniRule"/>
</dbReference>
<dbReference type="GO" id="GO:0071555">
    <property type="term" value="P:cell wall organization"/>
    <property type="evidence" value="ECO:0007669"/>
    <property type="project" value="UniProtKB-KW"/>
</dbReference>
<dbReference type="GO" id="GO:0009252">
    <property type="term" value="P:peptidoglycan biosynthetic process"/>
    <property type="evidence" value="ECO:0007669"/>
    <property type="project" value="UniProtKB-KW"/>
</dbReference>
<dbReference type="GO" id="GO:0008360">
    <property type="term" value="P:regulation of cell shape"/>
    <property type="evidence" value="ECO:0007669"/>
    <property type="project" value="UniProtKB-KW"/>
</dbReference>
<dbReference type="GO" id="GO:0046677">
    <property type="term" value="P:response to antibiotic"/>
    <property type="evidence" value="ECO:0007669"/>
    <property type="project" value="UniProtKB-UniRule"/>
</dbReference>
<dbReference type="HAMAP" id="MF_01006">
    <property type="entry name" value="Undec_diphosphatase"/>
    <property type="match status" value="1"/>
</dbReference>
<dbReference type="InterPro" id="IPR003824">
    <property type="entry name" value="UppP"/>
</dbReference>
<dbReference type="NCBIfam" id="NF001388">
    <property type="entry name" value="PRK00281.1-1"/>
    <property type="match status" value="1"/>
</dbReference>
<dbReference type="NCBIfam" id="NF001389">
    <property type="entry name" value="PRK00281.1-2"/>
    <property type="match status" value="1"/>
</dbReference>
<dbReference type="NCBIfam" id="NF001390">
    <property type="entry name" value="PRK00281.1-4"/>
    <property type="match status" value="1"/>
</dbReference>
<dbReference type="NCBIfam" id="TIGR00753">
    <property type="entry name" value="undec_PP_bacA"/>
    <property type="match status" value="1"/>
</dbReference>
<dbReference type="PANTHER" id="PTHR30622">
    <property type="entry name" value="UNDECAPRENYL-DIPHOSPHATASE"/>
    <property type="match status" value="1"/>
</dbReference>
<dbReference type="PANTHER" id="PTHR30622:SF3">
    <property type="entry name" value="UNDECAPRENYL-DIPHOSPHATASE"/>
    <property type="match status" value="1"/>
</dbReference>
<dbReference type="Pfam" id="PF02673">
    <property type="entry name" value="BacA"/>
    <property type="match status" value="1"/>
</dbReference>
<accession>B1JM21</accession>
<organism>
    <name type="scientific">Yersinia pseudotuberculosis serotype O:3 (strain YPIII)</name>
    <dbReference type="NCBI Taxonomy" id="502800"/>
    <lineage>
        <taxon>Bacteria</taxon>
        <taxon>Pseudomonadati</taxon>
        <taxon>Pseudomonadota</taxon>
        <taxon>Gammaproteobacteria</taxon>
        <taxon>Enterobacterales</taxon>
        <taxon>Yersiniaceae</taxon>
        <taxon>Yersinia</taxon>
    </lineage>
</organism>
<sequence length="272" mass="29483">MTDMYSLFVAFILGVVEGLTEFLPVSSTGHMIIVGELLGFTGDKAKTFEVIIQLGSILAVVVVFWRRLFGLIGIHFGAVPHEGKTNGHLTLGHILLAMIPAVILGLAFHDVIKALFDPKSVMYALVAGGVLLLAAEWLKPKNPKAVGLDDITYRQAFAIGCFQCLALWPGFSRSGATISGGMLVGVNRYAASEFSFILAVPMMIGASGLDLYKSLHFLTLGDLPMFAVGFITAFIVALIAIKTFLSLIKRISFVPFAIYRFIVAAVVYWVFM</sequence>
<name>UPPP_YERPY</name>
<feature type="chain" id="PRO_1000197423" description="Undecaprenyl-diphosphatase">
    <location>
        <begin position="1"/>
        <end position="272"/>
    </location>
</feature>
<feature type="transmembrane region" description="Helical" evidence="1">
    <location>
        <begin position="5"/>
        <end position="25"/>
    </location>
</feature>
<feature type="transmembrane region" description="Helical" evidence="1">
    <location>
        <begin position="45"/>
        <end position="65"/>
    </location>
</feature>
<feature type="transmembrane region" description="Helical" evidence="1">
    <location>
        <begin position="88"/>
        <end position="108"/>
    </location>
</feature>
<feature type="transmembrane region" description="Helical" evidence="1">
    <location>
        <begin position="114"/>
        <end position="134"/>
    </location>
</feature>
<feature type="transmembrane region" description="Helical" evidence="1">
    <location>
        <begin position="153"/>
        <end position="172"/>
    </location>
</feature>
<feature type="transmembrane region" description="Helical" evidence="1">
    <location>
        <begin position="189"/>
        <end position="209"/>
    </location>
</feature>
<feature type="transmembrane region" description="Helical" evidence="1">
    <location>
        <begin position="221"/>
        <end position="241"/>
    </location>
</feature>
<feature type="transmembrane region" description="Helical" evidence="1">
    <location>
        <begin position="251"/>
        <end position="271"/>
    </location>
</feature>
<comment type="function">
    <text evidence="1">Catalyzes the dephosphorylation of undecaprenyl diphosphate (UPP). Confers resistance to bacitracin.</text>
</comment>
<comment type="catalytic activity">
    <reaction evidence="1">
        <text>di-trans,octa-cis-undecaprenyl diphosphate + H2O = di-trans,octa-cis-undecaprenyl phosphate + phosphate + H(+)</text>
        <dbReference type="Rhea" id="RHEA:28094"/>
        <dbReference type="ChEBI" id="CHEBI:15377"/>
        <dbReference type="ChEBI" id="CHEBI:15378"/>
        <dbReference type="ChEBI" id="CHEBI:43474"/>
        <dbReference type="ChEBI" id="CHEBI:58405"/>
        <dbReference type="ChEBI" id="CHEBI:60392"/>
        <dbReference type="EC" id="3.6.1.27"/>
    </reaction>
</comment>
<comment type="subcellular location">
    <subcellularLocation>
        <location evidence="1">Cell inner membrane</location>
        <topology evidence="1">Multi-pass membrane protein</topology>
    </subcellularLocation>
</comment>
<comment type="miscellaneous">
    <text>Bacitracin is thought to be involved in the inhibition of peptidoglycan synthesis by sequestering undecaprenyl diphosphate, thereby reducing the pool of lipid carrier available.</text>
</comment>
<comment type="similarity">
    <text evidence="1">Belongs to the UppP family.</text>
</comment>
<evidence type="ECO:0000255" key="1">
    <source>
        <dbReference type="HAMAP-Rule" id="MF_01006"/>
    </source>
</evidence>
<reference key="1">
    <citation type="submission" date="2008-02" db="EMBL/GenBank/DDBJ databases">
        <title>Complete sequence of Yersinia pseudotuberculosis YPIII.</title>
        <authorList>
            <consortium name="US DOE Joint Genome Institute"/>
            <person name="Copeland A."/>
            <person name="Lucas S."/>
            <person name="Lapidus A."/>
            <person name="Glavina del Rio T."/>
            <person name="Dalin E."/>
            <person name="Tice H."/>
            <person name="Bruce D."/>
            <person name="Goodwin L."/>
            <person name="Pitluck S."/>
            <person name="Munk A.C."/>
            <person name="Brettin T."/>
            <person name="Detter J.C."/>
            <person name="Han C."/>
            <person name="Tapia R."/>
            <person name="Schmutz J."/>
            <person name="Larimer F."/>
            <person name="Land M."/>
            <person name="Hauser L."/>
            <person name="Challacombe J.F."/>
            <person name="Green L."/>
            <person name="Lindler L.E."/>
            <person name="Nikolich M.P."/>
            <person name="Richardson P."/>
        </authorList>
    </citation>
    <scope>NUCLEOTIDE SEQUENCE [LARGE SCALE GENOMIC DNA]</scope>
    <source>
        <strain>YPIII</strain>
    </source>
</reference>
<keyword id="KW-0046">Antibiotic resistance</keyword>
<keyword id="KW-0997">Cell inner membrane</keyword>
<keyword id="KW-1003">Cell membrane</keyword>
<keyword id="KW-0133">Cell shape</keyword>
<keyword id="KW-0961">Cell wall biogenesis/degradation</keyword>
<keyword id="KW-0378">Hydrolase</keyword>
<keyword id="KW-0472">Membrane</keyword>
<keyword id="KW-0573">Peptidoglycan synthesis</keyword>
<keyword id="KW-0812">Transmembrane</keyword>
<keyword id="KW-1133">Transmembrane helix</keyword>
<gene>
    <name evidence="1" type="primary">uppP</name>
    <name type="ordered locus">YPK_0640</name>
</gene>
<protein>
    <recommendedName>
        <fullName evidence="1">Undecaprenyl-diphosphatase</fullName>
        <ecNumber evidence="1">3.6.1.27</ecNumber>
    </recommendedName>
    <alternativeName>
        <fullName evidence="1">Bacitracin resistance protein</fullName>
    </alternativeName>
    <alternativeName>
        <fullName evidence="1">Undecaprenyl pyrophosphate phosphatase</fullName>
    </alternativeName>
</protein>
<proteinExistence type="inferred from homology"/>